<feature type="chain" id="PRO_0000404274" description="Capsid protein">
    <location>
        <begin position="1"/>
        <end position="436"/>
    </location>
</feature>
<feature type="region of interest" description="Disordered" evidence="2">
    <location>
        <begin position="326"/>
        <end position="370"/>
    </location>
</feature>
<feature type="compositionally biased region" description="Polar residues" evidence="2">
    <location>
        <begin position="330"/>
        <end position="344"/>
    </location>
</feature>
<comment type="function">
    <text evidence="1">Self-assembles to form an icosahedral capsid with a T=1 symmetry, about 30 nm in diameter, and consisting of 60 capsid proteins. The capsid encapsulates the genomic DNA. Capsid protein is involved in attachment and entry into the host cell (By similarity).</text>
</comment>
<comment type="subcellular location">
    <subcellularLocation>
        <location evidence="3">Virion</location>
    </subcellularLocation>
</comment>
<comment type="similarity">
    <text evidence="3">Belongs to the anelloviridae capsid protein family.</text>
</comment>
<gene>
    <name type="ORF">ORF1</name>
</gene>
<organism>
    <name type="scientific">Torque teno felis virus (isolate Fc-TTV4)</name>
    <dbReference type="NCBI Taxonomy" id="766188"/>
    <lineage>
        <taxon>Viruses</taxon>
        <taxon>Viruses incertae sedis</taxon>
        <taxon>Anelloviridae</taxon>
        <taxon>Etatorquevirus</taxon>
        <taxon>Etatorquevirus felid1</taxon>
    </lineage>
</organism>
<name>CAPSD_TTVF1</name>
<reference key="1">
    <citation type="journal article" date="2002" name="J. Gen. Virol.">
        <title>Genomic characterization of TT viruses (TTVs) in pigs, cats and dogs and their relatedness with species-specific TTVs in primates and tupaias.</title>
        <authorList>
            <person name="Okamoto H."/>
            <person name="Takahashi M."/>
            <person name="Nishizawa T."/>
            <person name="Tawara A."/>
            <person name="Fukai K."/>
            <person name="Muramatsu U."/>
            <person name="Naito Y."/>
            <person name="Yoshikawa A."/>
        </authorList>
    </citation>
    <scope>NUCLEOTIDE SEQUENCE [GENOMIC DNA]</scope>
</reference>
<protein>
    <recommendedName>
        <fullName>Capsid protein</fullName>
    </recommendedName>
</protein>
<sequence length="436" mass="51702">MYQSRRRRRRRWGRRILSRYKRKWGRRSRRGHGIYRRWRRWRRRPRTVVTEQHSRRVKTIIVRGWEPLGNICPTDSARAKATPYASYDSDSGQGQWHGTWGHHWFTFQSLVDRAEARLNSFSGNWESYDYLRFLGGTMYFMQPREMCFMFGNDPYLMTSDLDKTASQKNRAEETWITPGYLMHRPGTHLILSRQKVERRSMYKIRVPVPTSWRGWFPIPDCFSYVLCHWYWTWWDPDACFFDPCATGSSCEAEPWWSTAQTKQAWVDRTKLDDPPVGGTGPNQKTWAPFLPSRPCTNYYTHSASFWFKYKLKFQVTGENIWAPVPRDYSQRGTVPTAPSRQQVESEARAPYPKTNRPPTTADILPGDLDSDGILEDEAYERITRDNPCPKRPRPLGIRWWDGTPGRTLQEQQQAAVLRPKPRRQLLRRLRDVLLQL</sequence>
<organismHost>
    <name type="scientific">Felis catus</name>
    <name type="common">Cat</name>
    <name type="synonym">Felis silvestris catus</name>
    <dbReference type="NCBI Taxonomy" id="9685"/>
</organismHost>
<proteinExistence type="inferred from homology"/>
<keyword id="KW-0167">Capsid protein</keyword>
<keyword id="KW-1185">Reference proteome</keyword>
<keyword id="KW-1140">T=1 icosahedral capsid protein</keyword>
<keyword id="KW-0946">Virion</keyword>
<accession>Q8QVL3</accession>
<dbReference type="EMBL" id="AB076003">
    <property type="protein sequence ID" value="BAB90854.1"/>
    <property type="molecule type" value="Genomic_DNA"/>
</dbReference>
<dbReference type="RefSeq" id="YP_003587837.1">
    <property type="nucleotide sequence ID" value="NC_014072.1"/>
</dbReference>
<dbReference type="KEGG" id="vg:9086582"/>
<dbReference type="Proteomes" id="UP000008781">
    <property type="component" value="Segment"/>
</dbReference>
<dbReference type="GO" id="GO:0039615">
    <property type="term" value="C:T=1 icosahedral viral capsid"/>
    <property type="evidence" value="ECO:0007669"/>
    <property type="project" value="UniProtKB-KW"/>
</dbReference>
<dbReference type="InterPro" id="IPR004219">
    <property type="entry name" value="TTvirus_Unk"/>
</dbReference>
<dbReference type="Pfam" id="PF02956">
    <property type="entry name" value="TT_ORF1"/>
    <property type="match status" value="1"/>
</dbReference>
<evidence type="ECO:0000250" key="1"/>
<evidence type="ECO:0000256" key="2">
    <source>
        <dbReference type="SAM" id="MobiDB-lite"/>
    </source>
</evidence>
<evidence type="ECO:0000305" key="3"/>